<dbReference type="EC" id="7.1.1.-" evidence="1"/>
<dbReference type="EMBL" id="EF044213">
    <property type="protein sequence ID" value="ABJ89684.1"/>
    <property type="molecule type" value="Genomic_DNA"/>
</dbReference>
<dbReference type="RefSeq" id="YP_817487.1">
    <property type="nucleotide sequence ID" value="NC_008535.1"/>
</dbReference>
<dbReference type="SMR" id="A0A340"/>
<dbReference type="GeneID" id="4421834"/>
<dbReference type="OrthoDB" id="154075at2759"/>
<dbReference type="Proteomes" id="UP000515148">
    <property type="component" value="Chloroplast Pltd"/>
</dbReference>
<dbReference type="GO" id="GO:0009535">
    <property type="term" value="C:chloroplast thylakoid membrane"/>
    <property type="evidence" value="ECO:0007669"/>
    <property type="project" value="UniProtKB-SubCell"/>
</dbReference>
<dbReference type="GO" id="GO:0030964">
    <property type="term" value="C:NADH dehydrogenase complex"/>
    <property type="evidence" value="ECO:0007669"/>
    <property type="project" value="TreeGrafter"/>
</dbReference>
<dbReference type="GO" id="GO:0008137">
    <property type="term" value="F:NADH dehydrogenase (ubiquinone) activity"/>
    <property type="evidence" value="ECO:0007669"/>
    <property type="project" value="InterPro"/>
</dbReference>
<dbReference type="GO" id="GO:0048038">
    <property type="term" value="F:quinone binding"/>
    <property type="evidence" value="ECO:0007669"/>
    <property type="project" value="UniProtKB-KW"/>
</dbReference>
<dbReference type="GO" id="GO:0019684">
    <property type="term" value="P:photosynthesis, light reaction"/>
    <property type="evidence" value="ECO:0007669"/>
    <property type="project" value="UniProtKB-UniRule"/>
</dbReference>
<dbReference type="FunFam" id="1.20.58.1610:FF:000001">
    <property type="entry name" value="NAD(P)H-quinone oxidoreductase subunit 3, chloroplastic"/>
    <property type="match status" value="1"/>
</dbReference>
<dbReference type="Gene3D" id="1.20.58.1610">
    <property type="entry name" value="NADH:ubiquinone/plastoquinone oxidoreductase, chain 3"/>
    <property type="match status" value="1"/>
</dbReference>
<dbReference type="HAMAP" id="MF_01394">
    <property type="entry name" value="NDH1_NuoA"/>
    <property type="match status" value="1"/>
</dbReference>
<dbReference type="InterPro" id="IPR023043">
    <property type="entry name" value="NAD(P)H_OxRDtase_bac/plastid"/>
</dbReference>
<dbReference type="InterPro" id="IPR000440">
    <property type="entry name" value="NADH_UbQ/plastoQ_OxRdtase_su3"/>
</dbReference>
<dbReference type="InterPro" id="IPR038430">
    <property type="entry name" value="NDAH_ubi_oxred_su3_sf"/>
</dbReference>
<dbReference type="PANTHER" id="PTHR11058">
    <property type="entry name" value="NADH-UBIQUINONE OXIDOREDUCTASE CHAIN 3"/>
    <property type="match status" value="1"/>
</dbReference>
<dbReference type="PANTHER" id="PTHR11058:SF9">
    <property type="entry name" value="NADH-UBIQUINONE OXIDOREDUCTASE CHAIN 3"/>
    <property type="match status" value="1"/>
</dbReference>
<dbReference type="Pfam" id="PF00507">
    <property type="entry name" value="Oxidored_q4"/>
    <property type="match status" value="1"/>
</dbReference>
<proteinExistence type="inferred from homology"/>
<sequence>MFLLYEYDIFWTFLIISSLIPILAFFISGILAPISKGPEKLSSYESGIEPIGDAWLQFRIRYYMFALVFVVFDVETVFLYPWAMSFDILGVSVFIEALIFVLILIVGLVYAWRKGALEWS</sequence>
<feature type="chain" id="PRO_0000362823" description="NAD(P)H-quinone oxidoreductase subunit 3, chloroplastic">
    <location>
        <begin position="1"/>
        <end position="120"/>
    </location>
</feature>
<feature type="transmembrane region" description="Helical" evidence="1">
    <location>
        <begin position="14"/>
        <end position="34"/>
    </location>
</feature>
<feature type="transmembrane region" description="Helical" evidence="1">
    <location>
        <begin position="64"/>
        <end position="84"/>
    </location>
</feature>
<feature type="transmembrane region" description="Helical" evidence="1">
    <location>
        <begin position="88"/>
        <end position="108"/>
    </location>
</feature>
<comment type="function">
    <text evidence="1">NDH shuttles electrons from NAD(P)H:plastoquinone, via FMN and iron-sulfur (Fe-S) centers, to quinones in the photosynthetic chain and possibly in a chloroplast respiratory chain. The immediate electron acceptor for the enzyme in this species is believed to be plastoquinone. Couples the redox reaction to proton translocation, and thus conserves the redox energy in a proton gradient.</text>
</comment>
<comment type="catalytic activity">
    <reaction evidence="1">
        <text>a plastoquinone + NADH + (n+1) H(+)(in) = a plastoquinol + NAD(+) + n H(+)(out)</text>
        <dbReference type="Rhea" id="RHEA:42608"/>
        <dbReference type="Rhea" id="RHEA-COMP:9561"/>
        <dbReference type="Rhea" id="RHEA-COMP:9562"/>
        <dbReference type="ChEBI" id="CHEBI:15378"/>
        <dbReference type="ChEBI" id="CHEBI:17757"/>
        <dbReference type="ChEBI" id="CHEBI:57540"/>
        <dbReference type="ChEBI" id="CHEBI:57945"/>
        <dbReference type="ChEBI" id="CHEBI:62192"/>
    </reaction>
</comment>
<comment type="catalytic activity">
    <reaction evidence="1">
        <text>a plastoquinone + NADPH + (n+1) H(+)(in) = a plastoquinol + NADP(+) + n H(+)(out)</text>
        <dbReference type="Rhea" id="RHEA:42612"/>
        <dbReference type="Rhea" id="RHEA-COMP:9561"/>
        <dbReference type="Rhea" id="RHEA-COMP:9562"/>
        <dbReference type="ChEBI" id="CHEBI:15378"/>
        <dbReference type="ChEBI" id="CHEBI:17757"/>
        <dbReference type="ChEBI" id="CHEBI:57783"/>
        <dbReference type="ChEBI" id="CHEBI:58349"/>
        <dbReference type="ChEBI" id="CHEBI:62192"/>
    </reaction>
</comment>
<comment type="subunit">
    <text evidence="1">NDH is composed of at least 16 different subunits, 5 of which are encoded in the nucleus.</text>
</comment>
<comment type="subcellular location">
    <subcellularLocation>
        <location evidence="1">Plastid</location>
        <location evidence="1">Chloroplast thylakoid membrane</location>
        <topology evidence="1">Multi-pass membrane protein</topology>
    </subcellularLocation>
</comment>
<comment type="similarity">
    <text evidence="1">Belongs to the complex I subunit 3 family.</text>
</comment>
<protein>
    <recommendedName>
        <fullName evidence="1">NAD(P)H-quinone oxidoreductase subunit 3, chloroplastic</fullName>
        <ecNumber evidence="1">7.1.1.-</ecNumber>
    </recommendedName>
    <alternativeName>
        <fullName evidence="1">NAD(P)H dehydrogenase subunit 3</fullName>
    </alternativeName>
    <alternativeName>
        <fullName evidence="1">NADH-plastoquinone oxidoreductase subunit 3</fullName>
    </alternativeName>
</protein>
<name>NU3C_COFAR</name>
<reference key="1">
    <citation type="journal article" date="2007" name="Plant Biotechnol. J.">
        <title>The complete nucleotide sequence of the coffee (Coffea arabica L.) chloroplast genome: organization and implications for biotechnology and phylogenetic relationships amongst angiosperms.</title>
        <authorList>
            <person name="Samson N."/>
            <person name="Bausher M.G."/>
            <person name="Lee S.-B."/>
            <person name="Jansen R.K."/>
            <person name="Daniell H."/>
        </authorList>
    </citation>
    <scope>NUCLEOTIDE SEQUENCE [LARGE SCALE GENOMIC DNA]</scope>
</reference>
<evidence type="ECO:0000255" key="1">
    <source>
        <dbReference type="HAMAP-Rule" id="MF_01394"/>
    </source>
</evidence>
<keyword id="KW-0150">Chloroplast</keyword>
<keyword id="KW-0472">Membrane</keyword>
<keyword id="KW-0520">NAD</keyword>
<keyword id="KW-0521">NADP</keyword>
<keyword id="KW-0934">Plastid</keyword>
<keyword id="KW-0618">Plastoquinone</keyword>
<keyword id="KW-0874">Quinone</keyword>
<keyword id="KW-1185">Reference proteome</keyword>
<keyword id="KW-0793">Thylakoid</keyword>
<keyword id="KW-1278">Translocase</keyword>
<keyword id="KW-0812">Transmembrane</keyword>
<keyword id="KW-1133">Transmembrane helix</keyword>
<keyword id="KW-0813">Transport</keyword>
<gene>
    <name evidence="1" type="primary">ndhC</name>
</gene>
<organism>
    <name type="scientific">Coffea arabica</name>
    <name type="common">Arabian coffee</name>
    <dbReference type="NCBI Taxonomy" id="13443"/>
    <lineage>
        <taxon>Eukaryota</taxon>
        <taxon>Viridiplantae</taxon>
        <taxon>Streptophyta</taxon>
        <taxon>Embryophyta</taxon>
        <taxon>Tracheophyta</taxon>
        <taxon>Spermatophyta</taxon>
        <taxon>Magnoliopsida</taxon>
        <taxon>eudicotyledons</taxon>
        <taxon>Gunneridae</taxon>
        <taxon>Pentapetalae</taxon>
        <taxon>asterids</taxon>
        <taxon>lamiids</taxon>
        <taxon>Gentianales</taxon>
        <taxon>Rubiaceae</taxon>
        <taxon>Ixoroideae</taxon>
        <taxon>Gardenieae complex</taxon>
        <taxon>Bertiereae - Coffeeae clade</taxon>
        <taxon>Coffeeae</taxon>
        <taxon>Coffea</taxon>
    </lineage>
</organism>
<accession>A0A340</accession>
<geneLocation type="chloroplast"/>